<organism>
    <name type="scientific">Homo sapiens</name>
    <name type="common">Human</name>
    <dbReference type="NCBI Taxonomy" id="9606"/>
    <lineage>
        <taxon>Eukaryota</taxon>
        <taxon>Metazoa</taxon>
        <taxon>Chordata</taxon>
        <taxon>Craniata</taxon>
        <taxon>Vertebrata</taxon>
        <taxon>Euteleostomi</taxon>
        <taxon>Mammalia</taxon>
        <taxon>Eutheria</taxon>
        <taxon>Euarchontoglires</taxon>
        <taxon>Primates</taxon>
        <taxon>Haplorrhini</taxon>
        <taxon>Catarrhini</taxon>
        <taxon>Hominidae</taxon>
        <taxon>Homo</taxon>
    </lineage>
</organism>
<comment type="function">
    <text evidence="3">Acts as a transcriptional repressor.</text>
</comment>
<comment type="interaction">
    <interactant intactId="EBI-10250516">
        <id>Q6IV72</id>
    </interactant>
    <interactant intactId="EBI-10172290">
        <id>P60409</id>
        <label>KRTAP10-7</label>
    </interactant>
    <organismsDiffer>false</organismsDiffer>
    <experiments>3</experiments>
</comment>
<comment type="subcellular location">
    <subcellularLocation>
        <location evidence="3">Nucleus</location>
    </subcellularLocation>
    <subcellularLocation>
        <location evidence="3">Cytoplasm</location>
    </subcellularLocation>
    <text>Predominantly expressed in the nucleus.</text>
</comment>
<comment type="developmental stage">
    <text evidence="3">Expressed in 30 days old embryos. Almost undetectable in 60 days old embryos and in adults.</text>
</comment>
<comment type="domain">
    <text>The C2H2 domain is necessary for the transcriptional repression.</text>
</comment>
<comment type="similarity">
    <text evidence="4">Belongs to the krueppel C2H2-type zinc-finger protein family.</text>
</comment>
<accession>Q6IV72</accession>
<accession>B3KPM1</accession>
<accession>Q08AG3</accession>
<reference key="1">
    <citation type="journal article" date="2011" name="BMB Rep.">
        <title>A novel human KRAB-related zinc finger gene ZNF425 inhibits mitogen-activated protein kinase signaling pathway.</title>
        <authorList>
            <person name="Wang Y."/>
            <person name="Ye X."/>
            <person name="Zhou J."/>
            <person name="Wan Y."/>
            <person name="Xie H."/>
            <person name="Deng Y."/>
            <person name="Yan Y."/>
            <person name="Li Y."/>
            <person name="Fan X."/>
            <person name="Yuan W."/>
            <person name="Mo X."/>
            <person name="Wu X."/>
        </authorList>
    </citation>
    <scope>NUCLEOTIDE SEQUENCE [MRNA]</scope>
    <scope>FUNCTION</scope>
    <scope>SUBCELLULAR LOCATION</scope>
    <scope>DEVELOPMENTAL STAGE</scope>
    <source>
        <tissue>Heart</tissue>
    </source>
</reference>
<reference key="2">
    <citation type="journal article" date="2004" name="Nat. Genet.">
        <title>Complete sequencing and characterization of 21,243 full-length human cDNAs.</title>
        <authorList>
            <person name="Ota T."/>
            <person name="Suzuki Y."/>
            <person name="Nishikawa T."/>
            <person name="Otsuki T."/>
            <person name="Sugiyama T."/>
            <person name="Irie R."/>
            <person name="Wakamatsu A."/>
            <person name="Hayashi K."/>
            <person name="Sato H."/>
            <person name="Nagai K."/>
            <person name="Kimura K."/>
            <person name="Makita H."/>
            <person name="Sekine M."/>
            <person name="Obayashi M."/>
            <person name="Nishi T."/>
            <person name="Shibahara T."/>
            <person name="Tanaka T."/>
            <person name="Ishii S."/>
            <person name="Yamamoto J."/>
            <person name="Saito K."/>
            <person name="Kawai Y."/>
            <person name="Isono Y."/>
            <person name="Nakamura Y."/>
            <person name="Nagahari K."/>
            <person name="Murakami K."/>
            <person name="Yasuda T."/>
            <person name="Iwayanagi T."/>
            <person name="Wagatsuma M."/>
            <person name="Shiratori A."/>
            <person name="Sudo H."/>
            <person name="Hosoiri T."/>
            <person name="Kaku Y."/>
            <person name="Kodaira H."/>
            <person name="Kondo H."/>
            <person name="Sugawara M."/>
            <person name="Takahashi M."/>
            <person name="Kanda K."/>
            <person name="Yokoi T."/>
            <person name="Furuya T."/>
            <person name="Kikkawa E."/>
            <person name="Omura Y."/>
            <person name="Abe K."/>
            <person name="Kamihara K."/>
            <person name="Katsuta N."/>
            <person name="Sato K."/>
            <person name="Tanikawa M."/>
            <person name="Yamazaki M."/>
            <person name="Ninomiya K."/>
            <person name="Ishibashi T."/>
            <person name="Yamashita H."/>
            <person name="Murakawa K."/>
            <person name="Fujimori K."/>
            <person name="Tanai H."/>
            <person name="Kimata M."/>
            <person name="Watanabe M."/>
            <person name="Hiraoka S."/>
            <person name="Chiba Y."/>
            <person name="Ishida S."/>
            <person name="Ono Y."/>
            <person name="Takiguchi S."/>
            <person name="Watanabe S."/>
            <person name="Yosida M."/>
            <person name="Hotuta T."/>
            <person name="Kusano J."/>
            <person name="Kanehori K."/>
            <person name="Takahashi-Fujii A."/>
            <person name="Hara H."/>
            <person name="Tanase T.-O."/>
            <person name="Nomura Y."/>
            <person name="Togiya S."/>
            <person name="Komai F."/>
            <person name="Hara R."/>
            <person name="Takeuchi K."/>
            <person name="Arita M."/>
            <person name="Imose N."/>
            <person name="Musashino K."/>
            <person name="Yuuki H."/>
            <person name="Oshima A."/>
            <person name="Sasaki N."/>
            <person name="Aotsuka S."/>
            <person name="Yoshikawa Y."/>
            <person name="Matsunawa H."/>
            <person name="Ichihara T."/>
            <person name="Shiohata N."/>
            <person name="Sano S."/>
            <person name="Moriya S."/>
            <person name="Momiyama H."/>
            <person name="Satoh N."/>
            <person name="Takami S."/>
            <person name="Terashima Y."/>
            <person name="Suzuki O."/>
            <person name="Nakagawa S."/>
            <person name="Senoh A."/>
            <person name="Mizoguchi H."/>
            <person name="Goto Y."/>
            <person name="Shimizu F."/>
            <person name="Wakebe H."/>
            <person name="Hishigaki H."/>
            <person name="Watanabe T."/>
            <person name="Sugiyama A."/>
            <person name="Takemoto M."/>
            <person name="Kawakami B."/>
            <person name="Yamazaki M."/>
            <person name="Watanabe K."/>
            <person name="Kumagai A."/>
            <person name="Itakura S."/>
            <person name="Fukuzumi Y."/>
            <person name="Fujimori Y."/>
            <person name="Komiyama M."/>
            <person name="Tashiro H."/>
            <person name="Tanigami A."/>
            <person name="Fujiwara T."/>
            <person name="Ono T."/>
            <person name="Yamada K."/>
            <person name="Fujii Y."/>
            <person name="Ozaki K."/>
            <person name="Hirao M."/>
            <person name="Ohmori Y."/>
            <person name="Kawabata A."/>
            <person name="Hikiji T."/>
            <person name="Kobatake N."/>
            <person name="Inagaki H."/>
            <person name="Ikema Y."/>
            <person name="Okamoto S."/>
            <person name="Okitani R."/>
            <person name="Kawakami T."/>
            <person name="Noguchi S."/>
            <person name="Itoh T."/>
            <person name="Shigeta K."/>
            <person name="Senba T."/>
            <person name="Matsumura K."/>
            <person name="Nakajima Y."/>
            <person name="Mizuno T."/>
            <person name="Morinaga M."/>
            <person name="Sasaki M."/>
            <person name="Togashi T."/>
            <person name="Oyama M."/>
            <person name="Hata H."/>
            <person name="Watanabe M."/>
            <person name="Komatsu T."/>
            <person name="Mizushima-Sugano J."/>
            <person name="Satoh T."/>
            <person name="Shirai Y."/>
            <person name="Takahashi Y."/>
            <person name="Nakagawa K."/>
            <person name="Okumura K."/>
            <person name="Nagase T."/>
            <person name="Nomura N."/>
            <person name="Kikuchi H."/>
            <person name="Masuho Y."/>
            <person name="Yamashita R."/>
            <person name="Nakai K."/>
            <person name="Yada T."/>
            <person name="Nakamura Y."/>
            <person name="Ohara O."/>
            <person name="Isogai T."/>
            <person name="Sugano S."/>
        </authorList>
    </citation>
    <scope>NUCLEOTIDE SEQUENCE [LARGE SCALE MRNA]</scope>
</reference>
<reference key="3">
    <citation type="journal article" date="2003" name="Nature">
        <title>The DNA sequence of human chromosome 7.</title>
        <authorList>
            <person name="Hillier L.W."/>
            <person name="Fulton R.S."/>
            <person name="Fulton L.A."/>
            <person name="Graves T.A."/>
            <person name="Pepin K.H."/>
            <person name="Wagner-McPherson C."/>
            <person name="Layman D."/>
            <person name="Maas J."/>
            <person name="Jaeger S."/>
            <person name="Walker R."/>
            <person name="Wylie K."/>
            <person name="Sekhon M."/>
            <person name="Becker M.C."/>
            <person name="O'Laughlin M.D."/>
            <person name="Schaller M.E."/>
            <person name="Fewell G.A."/>
            <person name="Delehaunty K.D."/>
            <person name="Miner T.L."/>
            <person name="Nash W.E."/>
            <person name="Cordes M."/>
            <person name="Du H."/>
            <person name="Sun H."/>
            <person name="Edwards J."/>
            <person name="Bradshaw-Cordum H."/>
            <person name="Ali J."/>
            <person name="Andrews S."/>
            <person name="Isak A."/>
            <person name="Vanbrunt A."/>
            <person name="Nguyen C."/>
            <person name="Du F."/>
            <person name="Lamar B."/>
            <person name="Courtney L."/>
            <person name="Kalicki J."/>
            <person name="Ozersky P."/>
            <person name="Bielicki L."/>
            <person name="Scott K."/>
            <person name="Holmes A."/>
            <person name="Harkins R."/>
            <person name="Harris A."/>
            <person name="Strong C.M."/>
            <person name="Hou S."/>
            <person name="Tomlinson C."/>
            <person name="Dauphin-Kohlberg S."/>
            <person name="Kozlowicz-Reilly A."/>
            <person name="Leonard S."/>
            <person name="Rohlfing T."/>
            <person name="Rock S.M."/>
            <person name="Tin-Wollam A.-M."/>
            <person name="Abbott A."/>
            <person name="Minx P."/>
            <person name="Maupin R."/>
            <person name="Strowmatt C."/>
            <person name="Latreille P."/>
            <person name="Miller N."/>
            <person name="Johnson D."/>
            <person name="Murray J."/>
            <person name="Woessner J.P."/>
            <person name="Wendl M.C."/>
            <person name="Yang S.-P."/>
            <person name="Schultz B.R."/>
            <person name="Wallis J.W."/>
            <person name="Spieth J."/>
            <person name="Bieri T.A."/>
            <person name="Nelson J.O."/>
            <person name="Berkowicz N."/>
            <person name="Wohldmann P.E."/>
            <person name="Cook L.L."/>
            <person name="Hickenbotham M.T."/>
            <person name="Eldred J."/>
            <person name="Williams D."/>
            <person name="Bedell J.A."/>
            <person name="Mardis E.R."/>
            <person name="Clifton S.W."/>
            <person name="Chissoe S.L."/>
            <person name="Marra M.A."/>
            <person name="Raymond C."/>
            <person name="Haugen E."/>
            <person name="Gillett W."/>
            <person name="Zhou Y."/>
            <person name="James R."/>
            <person name="Phelps K."/>
            <person name="Iadanoto S."/>
            <person name="Bubb K."/>
            <person name="Simms E."/>
            <person name="Levy R."/>
            <person name="Clendenning J."/>
            <person name="Kaul R."/>
            <person name="Kent W.J."/>
            <person name="Furey T.S."/>
            <person name="Baertsch R.A."/>
            <person name="Brent M.R."/>
            <person name="Keibler E."/>
            <person name="Flicek P."/>
            <person name="Bork P."/>
            <person name="Suyama M."/>
            <person name="Bailey J.A."/>
            <person name="Portnoy M.E."/>
            <person name="Torrents D."/>
            <person name="Chinwalla A.T."/>
            <person name="Gish W.R."/>
            <person name="Eddy S.R."/>
            <person name="McPherson J.D."/>
            <person name="Olson M.V."/>
            <person name="Eichler E.E."/>
            <person name="Green E.D."/>
            <person name="Waterston R.H."/>
            <person name="Wilson R.K."/>
        </authorList>
    </citation>
    <scope>NUCLEOTIDE SEQUENCE [LARGE SCALE GENOMIC DNA]</scope>
</reference>
<reference key="4">
    <citation type="journal article" date="2004" name="Genome Res.">
        <title>The status, quality, and expansion of the NIH full-length cDNA project: the Mammalian Gene Collection (MGC).</title>
        <authorList>
            <consortium name="The MGC Project Team"/>
        </authorList>
    </citation>
    <scope>NUCLEOTIDE SEQUENCE [LARGE SCALE MRNA]</scope>
</reference>
<proteinExistence type="evidence at protein level"/>
<keyword id="KW-0963">Cytoplasm</keyword>
<keyword id="KW-0238">DNA-binding</keyword>
<keyword id="KW-0479">Metal-binding</keyword>
<keyword id="KW-0539">Nucleus</keyword>
<keyword id="KW-1267">Proteomics identification</keyword>
<keyword id="KW-1185">Reference proteome</keyword>
<keyword id="KW-0677">Repeat</keyword>
<keyword id="KW-0804">Transcription</keyword>
<keyword id="KW-0805">Transcription regulation</keyword>
<keyword id="KW-0862">Zinc</keyword>
<keyword id="KW-0863">Zinc-finger</keyword>
<feature type="chain" id="PRO_0000234577" description="Zinc finger protein 425">
    <location>
        <begin position="1"/>
        <end position="752"/>
    </location>
</feature>
<feature type="domain" description="KRAB" evidence="2">
    <location>
        <begin position="9"/>
        <end position="80"/>
    </location>
</feature>
<feature type="zinc finger region" description="C2H2-type 1" evidence="1">
    <location>
        <begin position="190"/>
        <end position="212"/>
    </location>
</feature>
<feature type="zinc finger region" description="C2H2-type 2" evidence="1">
    <location>
        <begin position="246"/>
        <end position="268"/>
    </location>
</feature>
<feature type="zinc finger region" description="C2H2-type 3" evidence="1">
    <location>
        <begin position="274"/>
        <end position="296"/>
    </location>
</feature>
<feature type="zinc finger region" description="C2H2-type 4" evidence="1">
    <location>
        <begin position="302"/>
        <end position="324"/>
    </location>
</feature>
<feature type="zinc finger region" description="C2H2-type 5" evidence="1">
    <location>
        <begin position="330"/>
        <end position="352"/>
    </location>
</feature>
<feature type="zinc finger region" description="C2H2-type 6" evidence="1">
    <location>
        <begin position="358"/>
        <end position="380"/>
    </location>
</feature>
<feature type="zinc finger region" description="C2H2-type 7" evidence="1">
    <location>
        <begin position="386"/>
        <end position="408"/>
    </location>
</feature>
<feature type="zinc finger region" description="C2H2-type 8" evidence="1">
    <location>
        <begin position="414"/>
        <end position="436"/>
    </location>
</feature>
<feature type="zinc finger region" description="C2H2-type 9" evidence="1">
    <location>
        <begin position="442"/>
        <end position="464"/>
    </location>
</feature>
<feature type="zinc finger region" description="C2H2-type 10" evidence="1">
    <location>
        <begin position="470"/>
        <end position="492"/>
    </location>
</feature>
<feature type="zinc finger region" description="C2H2-type 11" evidence="1">
    <location>
        <begin position="498"/>
        <end position="520"/>
    </location>
</feature>
<feature type="zinc finger region" description="C2H2-type 12" evidence="1">
    <location>
        <begin position="526"/>
        <end position="548"/>
    </location>
</feature>
<feature type="zinc finger region" description="C2H2-type 13" evidence="1">
    <location>
        <begin position="554"/>
        <end position="576"/>
    </location>
</feature>
<feature type="zinc finger region" description="C2H2-type 14" evidence="1">
    <location>
        <begin position="582"/>
        <end position="604"/>
    </location>
</feature>
<feature type="zinc finger region" description="C2H2-type 15" evidence="1">
    <location>
        <begin position="610"/>
        <end position="632"/>
    </location>
</feature>
<feature type="zinc finger region" description="C2H2-type 16" evidence="1">
    <location>
        <begin position="638"/>
        <end position="660"/>
    </location>
</feature>
<feature type="zinc finger region" description="C2H2-type 17" evidence="1">
    <location>
        <begin position="666"/>
        <end position="688"/>
    </location>
</feature>
<feature type="zinc finger region" description="C2H2-type 18" evidence="1">
    <location>
        <begin position="694"/>
        <end position="716"/>
    </location>
</feature>
<feature type="zinc finger region" description="C2H2-type 19" evidence="1">
    <location>
        <begin position="722"/>
        <end position="744"/>
    </location>
</feature>
<feature type="sequence variant" id="VAR_033565" description="In dbSNP:rs6965052.">
    <original>D</original>
    <variation>V</variation>
    <location>
        <position position="166"/>
    </location>
</feature>
<feature type="sequence conflict" description="In Ref. 4; AAI25190." evidence="4" ref="4">
    <original>L</original>
    <variation>P</variation>
    <location>
        <position position="289"/>
    </location>
</feature>
<feature type="sequence conflict" description="In Ref. 2; BAG51733." evidence="4" ref="2">
    <original>T</original>
    <variation>A</variation>
    <location>
        <position position="350"/>
    </location>
</feature>
<feature type="sequence conflict" description="In Ref. 2; BAG51733." evidence="4" ref="2">
    <original>G</original>
    <variation>V</variation>
    <location>
        <position position="662"/>
    </location>
</feature>
<sequence length="752" mass="87721">MAEPASVTVTFDDVALYFSEQEWEILEKWQKQMYKQEMKTNYETLDSLGYAFSKPDLITWMEQGRMLLISEQGCLDKTRRTTSPPTDEQLNMKNTGKLLCFDDEGTPRTKEEDCRLNGPQKQDLCAALRGKERKILLAQTATFQSPSLRETEILNKKVSITAYDPDKKDLRHKPRETPGRLEIPTGPRCYSCYVCRKVFQVRRDLLKHKRSHSKSQLCRYPKYKNSSRGKSELRRTQRLLCQKKRFQCSECEKSYFLKGSLVTHQVVHTGQRPYPCPECDKTFRYRANLKKHLCLHRGERPFCCGECGRAFVQQCELTEHLRLHSGEKPFQCPQCDRCFRLKRGMKVHLTQHSGKRPFHCPECGRSFSRKAALKTHQRTHSEEKPFSCGECGRKFIYKIKLDEHIRVHTGEKPFSCPECNKSFRLKRSLKAHGLQHIGKRPFQCPECSRGFFWRNAMRAHQRLHSEQKPFPCAECGKRFTRPSKLACHTRVHDRQKEFPCGECKKTFSQQSRLTQHLKVHTTEKPFSCAECGRSFRRRAHLTEHTRLHSGEEPFQCPECDKSFSWKASMKFHQRMHRDEKPFACGECDKTYTHQSQLTEHLRLHSGEKPYQCPECEKTFRLKGNLKSHLLQHSGQKPFSCVMCGKSFTQQYRLTEHIRVHSGEKPFQCPECDKSYCIRGSLKVHLYKHSGERPFQCPECGKGFLQKRSLKAHLCLHSGERPFSCDECGRSFTYVGALKTHIAVHAKEKPSSL</sequence>
<evidence type="ECO:0000255" key="1">
    <source>
        <dbReference type="PROSITE-ProRule" id="PRU00042"/>
    </source>
</evidence>
<evidence type="ECO:0000255" key="2">
    <source>
        <dbReference type="PROSITE-ProRule" id="PRU00119"/>
    </source>
</evidence>
<evidence type="ECO:0000269" key="3">
    <source>
    </source>
</evidence>
<evidence type="ECO:0000305" key="4"/>
<name>ZN425_HUMAN</name>
<protein>
    <recommendedName>
        <fullName>Zinc finger protein 425</fullName>
    </recommendedName>
</protein>
<gene>
    <name type="primary">ZNF425</name>
</gene>
<dbReference type="EMBL" id="AY621067">
    <property type="protein sequence ID" value="AAT40438.1"/>
    <property type="molecule type" value="mRNA"/>
</dbReference>
<dbReference type="EMBL" id="AK056498">
    <property type="protein sequence ID" value="BAG51733.1"/>
    <property type="molecule type" value="mRNA"/>
</dbReference>
<dbReference type="EMBL" id="AC073422">
    <property type="status" value="NOT_ANNOTATED_CDS"/>
    <property type="molecule type" value="Genomic_DNA"/>
</dbReference>
<dbReference type="EMBL" id="BC125189">
    <property type="protein sequence ID" value="AAI25190.1"/>
    <property type="molecule type" value="mRNA"/>
</dbReference>
<dbReference type="CCDS" id="CCDS34773.1"/>
<dbReference type="RefSeq" id="NP_001001661.1">
    <property type="nucleotide sequence ID" value="NM_001001661.3"/>
</dbReference>
<dbReference type="SMR" id="Q6IV72"/>
<dbReference type="BioGRID" id="127572">
    <property type="interactions" value="1"/>
</dbReference>
<dbReference type="FunCoup" id="Q6IV72">
    <property type="interactions" value="997"/>
</dbReference>
<dbReference type="IntAct" id="Q6IV72">
    <property type="interactions" value="1"/>
</dbReference>
<dbReference type="STRING" id="9606.ENSP00000367300"/>
<dbReference type="GlyGen" id="Q6IV72">
    <property type="glycosylation" value="1 site, 1 O-linked glycan (1 site)"/>
</dbReference>
<dbReference type="iPTMnet" id="Q6IV72"/>
<dbReference type="PhosphoSitePlus" id="Q6IV72"/>
<dbReference type="SwissPalm" id="Q6IV72"/>
<dbReference type="BioMuta" id="ZNF425"/>
<dbReference type="DMDM" id="74762333"/>
<dbReference type="jPOST" id="Q6IV72"/>
<dbReference type="MassIVE" id="Q6IV72"/>
<dbReference type="PaxDb" id="9606-ENSP00000367300"/>
<dbReference type="PeptideAtlas" id="Q6IV72"/>
<dbReference type="ProteomicsDB" id="66500"/>
<dbReference type="Antibodypedia" id="64196">
    <property type="antibodies" value="14 antibodies from 7 providers"/>
</dbReference>
<dbReference type="DNASU" id="155054"/>
<dbReference type="Ensembl" id="ENST00000378061.7">
    <property type="protein sequence ID" value="ENSP00000367300.2"/>
    <property type="gene ID" value="ENSG00000204947.9"/>
</dbReference>
<dbReference type="GeneID" id="155054"/>
<dbReference type="KEGG" id="hsa:155054"/>
<dbReference type="MANE-Select" id="ENST00000378061.7">
    <property type="protein sequence ID" value="ENSP00000367300.2"/>
    <property type="RefSeq nucleotide sequence ID" value="NM_001001661.3"/>
    <property type="RefSeq protein sequence ID" value="NP_001001661.1"/>
</dbReference>
<dbReference type="UCSC" id="uc003wfj.4">
    <property type="organism name" value="human"/>
</dbReference>
<dbReference type="AGR" id="HGNC:20690"/>
<dbReference type="CTD" id="155054"/>
<dbReference type="GeneCards" id="ZNF425"/>
<dbReference type="HGNC" id="HGNC:20690">
    <property type="gene designation" value="ZNF425"/>
</dbReference>
<dbReference type="HPA" id="ENSG00000204947">
    <property type="expression patterns" value="Low tissue specificity"/>
</dbReference>
<dbReference type="MIM" id="619507">
    <property type="type" value="gene"/>
</dbReference>
<dbReference type="neXtProt" id="NX_Q6IV72"/>
<dbReference type="OpenTargets" id="ENSG00000204947"/>
<dbReference type="PharmGKB" id="PA134984453"/>
<dbReference type="VEuPathDB" id="HostDB:ENSG00000204947"/>
<dbReference type="eggNOG" id="KOG1721">
    <property type="taxonomic scope" value="Eukaryota"/>
</dbReference>
<dbReference type="GeneTree" id="ENSGT00940000163692"/>
<dbReference type="HOGENOM" id="CLU_002678_44_5_1"/>
<dbReference type="InParanoid" id="Q6IV72"/>
<dbReference type="OMA" id="THMAVHA"/>
<dbReference type="OrthoDB" id="4748970at2759"/>
<dbReference type="PAN-GO" id="Q6IV72">
    <property type="GO annotations" value="3 GO annotations based on evolutionary models"/>
</dbReference>
<dbReference type="PhylomeDB" id="Q6IV72"/>
<dbReference type="TreeFam" id="TF326846"/>
<dbReference type="PathwayCommons" id="Q6IV72"/>
<dbReference type="Reactome" id="R-HSA-212436">
    <property type="pathway name" value="Generic Transcription Pathway"/>
</dbReference>
<dbReference type="Reactome" id="R-HSA-9843940">
    <property type="pathway name" value="Regulation of endogenous retroelements by KRAB-ZFP proteins"/>
</dbReference>
<dbReference type="SignaLink" id="Q6IV72"/>
<dbReference type="BioGRID-ORCS" id="155054">
    <property type="hits" value="26 hits in 1174 CRISPR screens"/>
</dbReference>
<dbReference type="ChiTaRS" id="ZNF425">
    <property type="organism name" value="human"/>
</dbReference>
<dbReference type="GenomeRNAi" id="155054"/>
<dbReference type="Pharos" id="Q6IV72">
    <property type="development level" value="Tdark"/>
</dbReference>
<dbReference type="PRO" id="PR:Q6IV72"/>
<dbReference type="Proteomes" id="UP000005640">
    <property type="component" value="Chromosome 7"/>
</dbReference>
<dbReference type="RNAct" id="Q6IV72">
    <property type="molecule type" value="protein"/>
</dbReference>
<dbReference type="Bgee" id="ENSG00000204947">
    <property type="expression patterns" value="Expressed in male germ line stem cell (sensu Vertebrata) in testis and 98 other cell types or tissues"/>
</dbReference>
<dbReference type="ExpressionAtlas" id="Q6IV72">
    <property type="expression patterns" value="baseline and differential"/>
</dbReference>
<dbReference type="GO" id="GO:0005737">
    <property type="term" value="C:cytoplasm"/>
    <property type="evidence" value="ECO:0000314"/>
    <property type="project" value="UniProtKB"/>
</dbReference>
<dbReference type="GO" id="GO:0005654">
    <property type="term" value="C:nucleoplasm"/>
    <property type="evidence" value="ECO:0000314"/>
    <property type="project" value="HPA"/>
</dbReference>
<dbReference type="GO" id="GO:0005634">
    <property type="term" value="C:nucleus"/>
    <property type="evidence" value="ECO:0000314"/>
    <property type="project" value="UniProtKB"/>
</dbReference>
<dbReference type="GO" id="GO:0000981">
    <property type="term" value="F:DNA-binding transcription factor activity, RNA polymerase II-specific"/>
    <property type="evidence" value="ECO:0000318"/>
    <property type="project" value="GO_Central"/>
</dbReference>
<dbReference type="GO" id="GO:0000977">
    <property type="term" value="F:RNA polymerase II transcription regulatory region sequence-specific DNA binding"/>
    <property type="evidence" value="ECO:0000318"/>
    <property type="project" value="GO_Central"/>
</dbReference>
<dbReference type="GO" id="GO:0008270">
    <property type="term" value="F:zinc ion binding"/>
    <property type="evidence" value="ECO:0007669"/>
    <property type="project" value="UniProtKB-KW"/>
</dbReference>
<dbReference type="GO" id="GO:0045892">
    <property type="term" value="P:negative regulation of DNA-templated transcription"/>
    <property type="evidence" value="ECO:0000314"/>
    <property type="project" value="UniProtKB"/>
</dbReference>
<dbReference type="GO" id="GO:0006357">
    <property type="term" value="P:regulation of transcription by RNA polymerase II"/>
    <property type="evidence" value="ECO:0000318"/>
    <property type="project" value="GO_Central"/>
</dbReference>
<dbReference type="CDD" id="cd07765">
    <property type="entry name" value="KRAB_A-box"/>
    <property type="match status" value="1"/>
</dbReference>
<dbReference type="FunFam" id="3.30.160.60:FF:000151">
    <property type="entry name" value="Zinc finger and SCAN domain-containing 21"/>
    <property type="match status" value="3"/>
</dbReference>
<dbReference type="FunFam" id="3.30.160.60:FF:001596">
    <property type="entry name" value="Zinc finger protein 1048"/>
    <property type="match status" value="1"/>
</dbReference>
<dbReference type="FunFam" id="3.30.160.60:FF:000189">
    <property type="entry name" value="zinc finger protein 133 isoform X1"/>
    <property type="match status" value="2"/>
</dbReference>
<dbReference type="FunFam" id="3.30.160.60:FF:001064">
    <property type="entry name" value="Zinc finger protein 425"/>
    <property type="match status" value="1"/>
</dbReference>
<dbReference type="FunFam" id="3.30.160.60:FF:001552">
    <property type="entry name" value="Zinc finger protein 425"/>
    <property type="match status" value="1"/>
</dbReference>
<dbReference type="FunFam" id="3.30.160.60:FF:001744">
    <property type="entry name" value="Zinc finger protein 425"/>
    <property type="match status" value="1"/>
</dbReference>
<dbReference type="FunFam" id="3.30.160.60:FF:001785">
    <property type="entry name" value="Zinc finger protein 425"/>
    <property type="match status" value="1"/>
</dbReference>
<dbReference type="FunFam" id="3.30.160.60:FF:001815">
    <property type="entry name" value="Zinc finger protein 425"/>
    <property type="match status" value="1"/>
</dbReference>
<dbReference type="FunFam" id="3.30.160.60:FF:001870">
    <property type="entry name" value="Zinc finger protein 425"/>
    <property type="match status" value="1"/>
</dbReference>
<dbReference type="FunFam" id="3.30.160.60:FF:001908">
    <property type="entry name" value="Zinc finger protein 425"/>
    <property type="match status" value="1"/>
</dbReference>
<dbReference type="FunFam" id="3.30.160.60:FF:001909">
    <property type="entry name" value="Zinc finger protein 425"/>
    <property type="match status" value="1"/>
</dbReference>
<dbReference type="FunFam" id="3.30.160.60:FF:001981">
    <property type="entry name" value="Zinc finger protein 425"/>
    <property type="match status" value="1"/>
</dbReference>
<dbReference type="FunFam" id="3.30.160.60:FF:001276">
    <property type="entry name" value="zinc finger protein 425"/>
    <property type="match status" value="2"/>
</dbReference>
<dbReference type="FunFam" id="3.30.160.60:FF:000562">
    <property type="entry name" value="Zinc finger protein 786"/>
    <property type="match status" value="1"/>
</dbReference>
<dbReference type="Gene3D" id="6.10.140.140">
    <property type="match status" value="1"/>
</dbReference>
<dbReference type="Gene3D" id="3.30.160.60">
    <property type="entry name" value="Classic Zinc Finger"/>
    <property type="match status" value="18"/>
</dbReference>
<dbReference type="InterPro" id="IPR003655">
    <property type="entry name" value="aKRAB"/>
</dbReference>
<dbReference type="InterPro" id="IPR050589">
    <property type="entry name" value="Ikaros_C2H2-ZF"/>
</dbReference>
<dbReference type="InterPro" id="IPR001909">
    <property type="entry name" value="KRAB"/>
</dbReference>
<dbReference type="InterPro" id="IPR036051">
    <property type="entry name" value="KRAB_dom_sf"/>
</dbReference>
<dbReference type="InterPro" id="IPR036236">
    <property type="entry name" value="Znf_C2H2_sf"/>
</dbReference>
<dbReference type="InterPro" id="IPR013087">
    <property type="entry name" value="Znf_C2H2_type"/>
</dbReference>
<dbReference type="PANTHER" id="PTHR24404">
    <property type="entry name" value="ZINC FINGER PROTEIN"/>
    <property type="match status" value="1"/>
</dbReference>
<dbReference type="PANTHER" id="PTHR24404:SF41">
    <property type="entry name" value="ZINC FINGER PROTEIN 613"/>
    <property type="match status" value="1"/>
</dbReference>
<dbReference type="Pfam" id="PF01352">
    <property type="entry name" value="KRAB"/>
    <property type="match status" value="1"/>
</dbReference>
<dbReference type="Pfam" id="PF00096">
    <property type="entry name" value="zf-C2H2"/>
    <property type="match status" value="14"/>
</dbReference>
<dbReference type="SMART" id="SM00349">
    <property type="entry name" value="KRAB"/>
    <property type="match status" value="1"/>
</dbReference>
<dbReference type="SMART" id="SM00355">
    <property type="entry name" value="ZnF_C2H2"/>
    <property type="match status" value="19"/>
</dbReference>
<dbReference type="SUPFAM" id="SSF57667">
    <property type="entry name" value="beta-beta-alpha zinc fingers"/>
    <property type="match status" value="11"/>
</dbReference>
<dbReference type="SUPFAM" id="SSF109640">
    <property type="entry name" value="KRAB domain (Kruppel-associated box)"/>
    <property type="match status" value="1"/>
</dbReference>
<dbReference type="PROSITE" id="PS50805">
    <property type="entry name" value="KRAB"/>
    <property type="match status" value="1"/>
</dbReference>
<dbReference type="PROSITE" id="PS00028">
    <property type="entry name" value="ZINC_FINGER_C2H2_1"/>
    <property type="match status" value="19"/>
</dbReference>
<dbReference type="PROSITE" id="PS50157">
    <property type="entry name" value="ZINC_FINGER_C2H2_2"/>
    <property type="match status" value="19"/>
</dbReference>